<proteinExistence type="evidence at protein level"/>
<comment type="function">
    <text evidence="4">Involved in the catabolism of purine nucleotides. Can use allantoate as substrate. The sequential activity of AAH, UGLYAH and UAH allows a complete purine breakdown without the intermediate generation of urea.</text>
</comment>
<comment type="catalytic activity">
    <reaction evidence="4">
        <text>allantoate + H2O + 2 H(+) = (S)-2-ureidoglycine + NH4(+) + CO2</text>
        <dbReference type="Rhea" id="RHEA:27485"/>
        <dbReference type="ChEBI" id="CHEBI:15377"/>
        <dbReference type="ChEBI" id="CHEBI:15378"/>
        <dbReference type="ChEBI" id="CHEBI:16526"/>
        <dbReference type="ChEBI" id="CHEBI:17536"/>
        <dbReference type="ChEBI" id="CHEBI:28938"/>
        <dbReference type="ChEBI" id="CHEBI:59947"/>
        <dbReference type="EC" id="3.5.3.9"/>
    </reaction>
</comment>
<comment type="cofactor">
    <cofactor evidence="1">
        <name>Mn(2+)</name>
        <dbReference type="ChEBI" id="CHEBI:29035"/>
    </cofactor>
    <text evidence="2">Binds 2 manganese ions per subunit.</text>
</comment>
<comment type="biophysicochemical properties">
    <kinetics>
        <KM evidence="4">102 uM for allantoate</KM>
        <text evidence="4">kcat is 34 sec(-1) for allantoate.</text>
    </kinetics>
</comment>
<comment type="subunit">
    <text evidence="1">Homodimer.</text>
</comment>
<comment type="subcellular location">
    <subcellularLocation>
        <location evidence="1">Endoplasmic reticulum</location>
    </subcellularLocation>
</comment>
<comment type="tissue specificity">
    <text evidence="4">Expressed in stems and leaves, and at low levels in roots. Not detected in nodules.</text>
</comment>
<comment type="similarity">
    <text evidence="6">Belongs to the peptidase M20A family.</text>
</comment>
<gene>
    <name evidence="5" type="primary">AAH2</name>
    <name type="ordered locus">Glyma09g05600</name>
</gene>
<evidence type="ECO:0000250" key="1">
    <source>
        <dbReference type="UniProtKB" id="C0M0V4"/>
    </source>
</evidence>
<evidence type="ECO:0000250" key="2">
    <source>
        <dbReference type="UniProtKB" id="Q8VXY9"/>
    </source>
</evidence>
<evidence type="ECO:0000255" key="3"/>
<evidence type="ECO:0000269" key="4">
    <source>
    </source>
</evidence>
<evidence type="ECO:0000303" key="5">
    <source>
    </source>
</evidence>
<evidence type="ECO:0000305" key="6"/>
<evidence type="ECO:0000312" key="7">
    <source>
        <dbReference type="Proteomes" id="UP000008827"/>
    </source>
</evidence>
<keyword id="KW-0256">Endoplasmic reticulum</keyword>
<keyword id="KW-0378">Hydrolase</keyword>
<keyword id="KW-0464">Manganese</keyword>
<keyword id="KW-0479">Metal-binding</keyword>
<keyword id="KW-0659">Purine metabolism</keyword>
<keyword id="KW-1185">Reference proteome</keyword>
<keyword id="KW-0732">Signal</keyword>
<protein>
    <recommendedName>
        <fullName evidence="6">Allantoate deiminase 2</fullName>
        <ecNumber evidence="4">3.5.3.9</ecNumber>
    </recommendedName>
    <alternativeName>
        <fullName evidence="5">Allantoate amidohydrolase 2</fullName>
        <shortName evidence="5">GmAAH2</shortName>
    </alternativeName>
</protein>
<dbReference type="EC" id="3.5.3.9" evidence="4"/>
<dbReference type="EMBL" id="CM000842">
    <property type="protein sequence ID" value="KRH37194.1"/>
    <property type="molecule type" value="Genomic_DNA"/>
</dbReference>
<dbReference type="RefSeq" id="NP_001347284.1">
    <property type="nucleotide sequence ID" value="NM_001360355.1"/>
</dbReference>
<dbReference type="RefSeq" id="XP_003533667.1">
    <property type="nucleotide sequence ID" value="XM_003533619.3"/>
</dbReference>
<dbReference type="SMR" id="I1L153"/>
<dbReference type="FunCoup" id="I1L153">
    <property type="interactions" value="24"/>
</dbReference>
<dbReference type="STRING" id="3847.I1L153"/>
<dbReference type="MEROPS" id="M20.A07"/>
<dbReference type="PaxDb" id="3847-GLYMA09G05600.1"/>
<dbReference type="EnsemblPlants" id="KRH37194">
    <property type="protein sequence ID" value="KRH37194"/>
    <property type="gene ID" value="GLYMA_09G050800"/>
</dbReference>
<dbReference type="GeneID" id="100819399"/>
<dbReference type="Gramene" id="KRH37194">
    <property type="protein sequence ID" value="KRH37194"/>
    <property type="gene ID" value="GLYMA_09G050800"/>
</dbReference>
<dbReference type="eggNOG" id="ENOG502QSJ5">
    <property type="taxonomic scope" value="Eukaryota"/>
</dbReference>
<dbReference type="HOGENOM" id="CLU_024588_6_1_1"/>
<dbReference type="InParanoid" id="I1L153"/>
<dbReference type="OrthoDB" id="4676at2759"/>
<dbReference type="SABIO-RK" id="I1L153"/>
<dbReference type="Proteomes" id="UP000008827">
    <property type="component" value="Chromosome 9"/>
</dbReference>
<dbReference type="GO" id="GO:0005783">
    <property type="term" value="C:endoplasmic reticulum"/>
    <property type="evidence" value="ECO:0007669"/>
    <property type="project" value="UniProtKB-SubCell"/>
</dbReference>
<dbReference type="GO" id="GO:0047652">
    <property type="term" value="F:allantoate deiminase activity"/>
    <property type="evidence" value="ECO:0007669"/>
    <property type="project" value="UniProtKB-EC"/>
</dbReference>
<dbReference type="GO" id="GO:0046872">
    <property type="term" value="F:metal ion binding"/>
    <property type="evidence" value="ECO:0007669"/>
    <property type="project" value="UniProtKB-KW"/>
</dbReference>
<dbReference type="GO" id="GO:0006144">
    <property type="term" value="P:purine nucleobase metabolic process"/>
    <property type="evidence" value="ECO:0007669"/>
    <property type="project" value="UniProtKB-KW"/>
</dbReference>
<dbReference type="CDD" id="cd03884">
    <property type="entry name" value="M20_bAS"/>
    <property type="match status" value="1"/>
</dbReference>
<dbReference type="FunFam" id="3.30.70.360:FF:000019">
    <property type="entry name" value="Allantoate deiminase"/>
    <property type="match status" value="1"/>
</dbReference>
<dbReference type="Gene3D" id="3.30.70.360">
    <property type="match status" value="1"/>
</dbReference>
<dbReference type="Gene3D" id="3.40.630.10">
    <property type="entry name" value="Zn peptidases"/>
    <property type="match status" value="1"/>
</dbReference>
<dbReference type="InterPro" id="IPR010158">
    <property type="entry name" value="Amidase_Cbmase"/>
</dbReference>
<dbReference type="InterPro" id="IPR001261">
    <property type="entry name" value="ArgE/DapE_CS"/>
</dbReference>
<dbReference type="InterPro" id="IPR036264">
    <property type="entry name" value="Bact_exopeptidase_dim_dom"/>
</dbReference>
<dbReference type="InterPro" id="IPR002933">
    <property type="entry name" value="Peptidase_M20"/>
</dbReference>
<dbReference type="InterPro" id="IPR011650">
    <property type="entry name" value="Peptidase_M20_dimer"/>
</dbReference>
<dbReference type="NCBIfam" id="TIGR01879">
    <property type="entry name" value="hydantase"/>
    <property type="match status" value="1"/>
</dbReference>
<dbReference type="PANTHER" id="PTHR32494">
    <property type="entry name" value="ALLANTOATE DEIMINASE-RELATED"/>
    <property type="match status" value="1"/>
</dbReference>
<dbReference type="PANTHER" id="PTHR32494:SF19">
    <property type="entry name" value="ALLANTOATE DEIMINASE-RELATED"/>
    <property type="match status" value="1"/>
</dbReference>
<dbReference type="Pfam" id="PF07687">
    <property type="entry name" value="M20_dimer"/>
    <property type="match status" value="1"/>
</dbReference>
<dbReference type="Pfam" id="PF01546">
    <property type="entry name" value="Peptidase_M20"/>
    <property type="match status" value="1"/>
</dbReference>
<dbReference type="SUPFAM" id="SSF55031">
    <property type="entry name" value="Bacterial exopeptidase dimerisation domain"/>
    <property type="match status" value="1"/>
</dbReference>
<dbReference type="SUPFAM" id="SSF53187">
    <property type="entry name" value="Zn-dependent exopeptidases"/>
    <property type="match status" value="1"/>
</dbReference>
<dbReference type="PROSITE" id="PS00758">
    <property type="entry name" value="ARGE_DAPE_CPG2_1"/>
    <property type="match status" value="1"/>
</dbReference>
<feature type="signal peptide" evidence="3">
    <location>
        <begin position="1"/>
        <end position="30"/>
    </location>
</feature>
<feature type="chain" id="PRO_5009336373" description="Allantoate deiminase 2" evidence="3">
    <location>
        <begin position="31"/>
        <end position="483"/>
    </location>
</feature>
<feature type="binding site" evidence="2">
    <location>
        <position position="125"/>
    </location>
    <ligand>
        <name>Mn(2+)</name>
        <dbReference type="ChEBI" id="CHEBI:29035"/>
        <label>1</label>
    </ligand>
</feature>
<feature type="binding site" evidence="2">
    <location>
        <position position="136"/>
    </location>
    <ligand>
        <name>Mn(2+)</name>
        <dbReference type="ChEBI" id="CHEBI:29035"/>
        <label>1</label>
    </ligand>
</feature>
<feature type="binding site" evidence="2">
    <location>
        <position position="136"/>
    </location>
    <ligand>
        <name>Mn(2+)</name>
        <dbReference type="ChEBI" id="CHEBI:29035"/>
        <label>2</label>
    </ligand>
</feature>
<feature type="binding site" evidence="2">
    <location>
        <position position="173"/>
    </location>
    <ligand>
        <name>Mn(2+)</name>
        <dbReference type="ChEBI" id="CHEBI:29035"/>
        <label>2</label>
    </ligand>
</feature>
<feature type="binding site" evidence="2">
    <location>
        <position position="239"/>
    </location>
    <ligand>
        <name>Mn(2+)</name>
        <dbReference type="ChEBI" id="CHEBI:29035"/>
        <label>1</label>
    </ligand>
</feature>
<feature type="binding site" evidence="2">
    <location>
        <position position="457"/>
    </location>
    <ligand>
        <name>Mn(2+)</name>
        <dbReference type="ChEBI" id="CHEBI:29035"/>
        <label>2</label>
    </ligand>
</feature>
<name>AAH2_SOYBN</name>
<accession>I1L153</accession>
<organism evidence="7">
    <name type="scientific">Glycine max</name>
    <name type="common">Soybean</name>
    <name type="synonym">Glycine hispida</name>
    <dbReference type="NCBI Taxonomy" id="3847"/>
    <lineage>
        <taxon>Eukaryota</taxon>
        <taxon>Viridiplantae</taxon>
        <taxon>Streptophyta</taxon>
        <taxon>Embryophyta</taxon>
        <taxon>Tracheophyta</taxon>
        <taxon>Spermatophyta</taxon>
        <taxon>Magnoliopsida</taxon>
        <taxon>eudicotyledons</taxon>
        <taxon>Gunneridae</taxon>
        <taxon>Pentapetalae</taxon>
        <taxon>rosids</taxon>
        <taxon>fabids</taxon>
        <taxon>Fabales</taxon>
        <taxon>Fabaceae</taxon>
        <taxon>Papilionoideae</taxon>
        <taxon>50 kb inversion clade</taxon>
        <taxon>NPAAA clade</taxon>
        <taxon>indigoferoid/millettioid clade</taxon>
        <taxon>Phaseoleae</taxon>
        <taxon>Glycine</taxon>
        <taxon>Glycine subgen. Soja</taxon>
    </lineage>
</organism>
<sequence>MSSATASNTFFLHSCFLLFCLLSAPSCVSMFSGIETGDLEKRDDLFPQILRDEAVARLYELGKVSDASGYLERTFLSPASMRAINLIRKWMEDAGLRTWVDQMGNVHGRVDGANANAEALLIGSHMDTVVDAGMFDGSLGIVSAISALKAMHVNGKLQKLKRPVEVIAFSDEEGVRFQTTFLGSGAIAGILPGTTLEISDKREVMIKDFLKENSIDITEESLLKLKYDPKSVWGYVEVHIEQGPVLEQVGFPLGVVKGIAGQTRLKVTVRGSQGHAGTVPMSMRQDPMAAAAEQIVVLESLCKHPEEYLSYDGHCSDSTVKSLSTSLVCTVGEISTWPSASNVIPGQVTYTVDIRAIDDLGREAVIYDLSKQIYQICDKRSVSCIIEHKHDAGAVICDSDLSSQLKSAAYSALKKMEGDIQDEVPTLMSGAGHDAMAISHLTKVGMLFVRCRGGISHSPQEHVLDNDVWAASLATLSFLENLS</sequence>
<reference key="1">
    <citation type="journal article" date="2010" name="Nature">
        <title>Genome sequence of the palaeopolyploid soybean.</title>
        <authorList>
            <person name="Schmutz J."/>
            <person name="Cannon S.B."/>
            <person name="Schlueter J."/>
            <person name="Ma J."/>
            <person name="Mitros T."/>
            <person name="Nelson W."/>
            <person name="Hyten D.L."/>
            <person name="Song Q."/>
            <person name="Thelen J.J."/>
            <person name="Cheng J."/>
            <person name="Xu D."/>
            <person name="Hellsten U."/>
            <person name="May G.D."/>
            <person name="Yu Y."/>
            <person name="Sakurai T."/>
            <person name="Umezawa T."/>
            <person name="Bhattacharyya M.K."/>
            <person name="Sandhu D."/>
            <person name="Valliyodan B."/>
            <person name="Lindquist E."/>
            <person name="Peto M."/>
            <person name="Grant D."/>
            <person name="Shu S."/>
            <person name="Goodstein D."/>
            <person name="Barry K."/>
            <person name="Futrell-Griggs M."/>
            <person name="Abernathy B."/>
            <person name="Du J."/>
            <person name="Tian Z."/>
            <person name="Zhu L."/>
            <person name="Gill N."/>
            <person name="Joshi T."/>
            <person name="Libault M."/>
            <person name="Sethuraman A."/>
            <person name="Zhang X.-C."/>
            <person name="Shinozaki K."/>
            <person name="Nguyen H.T."/>
            <person name="Wing R.A."/>
            <person name="Cregan P."/>
            <person name="Specht J."/>
            <person name="Grimwood J."/>
            <person name="Rokhsar D."/>
            <person name="Stacey G."/>
            <person name="Shoemaker R.C."/>
            <person name="Jackson S.A."/>
        </authorList>
    </citation>
    <scope>NUCLEOTIDE SEQUENCE [LARGE SCALE GENOMIC DNA]</scope>
    <source>
        <strain>cv. Williams 82</strain>
        <tissue>Callus</tissue>
    </source>
</reference>
<reference key="2">
    <citation type="journal article" date="2013" name="Plant Physiol.">
        <title>The ureide-degrading reactions of purine ring catabolism employ three amidohydrolases and one aminohydrolase in Arabidopsis, soybean, and rice.</title>
        <authorList>
            <person name="Werner A.K."/>
            <person name="Medina-Escobar N."/>
            <person name="Zulawski M."/>
            <person name="Sparkes I.A."/>
            <person name="Cao F.Q."/>
            <person name="Witte C.P."/>
        </authorList>
    </citation>
    <scope>FUNCTION</scope>
    <scope>CATALYTIC ACTIVITY</scope>
    <scope>BIOPHYSICOCHEMICAL PROPERTIES</scope>
    <scope>TISSUE SPECIFICITY</scope>
</reference>